<proteinExistence type="inferred from homology"/>
<evidence type="ECO:0000255" key="1">
    <source>
        <dbReference type="HAMAP-Rule" id="MF_01208"/>
    </source>
</evidence>
<feature type="chain" id="PRO_0000110670" description="Orotate phosphoribosyltransferase">
    <location>
        <begin position="1"/>
        <end position="210"/>
    </location>
</feature>
<feature type="binding site" evidence="1">
    <location>
        <position position="94"/>
    </location>
    <ligand>
        <name>5-phospho-alpha-D-ribose 1-diphosphate</name>
        <dbReference type="ChEBI" id="CHEBI:58017"/>
        <note>ligand shared between dimeric partners</note>
    </ligand>
</feature>
<feature type="binding site" evidence="1">
    <location>
        <position position="98"/>
    </location>
    <ligand>
        <name>5-phospho-alpha-D-ribose 1-diphosphate</name>
        <dbReference type="ChEBI" id="CHEBI:58017"/>
        <note>ligand shared between dimeric partners</note>
    </ligand>
</feature>
<feature type="binding site" evidence="1">
    <location>
        <position position="100"/>
    </location>
    <ligand>
        <name>5-phospho-alpha-D-ribose 1-diphosphate</name>
        <dbReference type="ChEBI" id="CHEBI:58017"/>
        <note>ligand shared between dimeric partners</note>
    </ligand>
</feature>
<feature type="binding site" description="in other chain" evidence="1">
    <location>
        <begin position="120"/>
        <end position="128"/>
    </location>
    <ligand>
        <name>5-phospho-alpha-D-ribose 1-diphosphate</name>
        <dbReference type="ChEBI" id="CHEBI:58017"/>
        <note>ligand shared between dimeric partners</note>
    </ligand>
</feature>
<feature type="binding site" evidence="1">
    <location>
        <position position="124"/>
    </location>
    <ligand>
        <name>orotate</name>
        <dbReference type="ChEBI" id="CHEBI:30839"/>
    </ligand>
</feature>
<gene>
    <name evidence="1" type="primary">pyrE</name>
    <name type="ordered locus">BH2532</name>
</gene>
<comment type="function">
    <text evidence="1">Catalyzes the transfer of a ribosyl phosphate group from 5-phosphoribose 1-diphosphate to orotate, leading to the formation of orotidine monophosphate (OMP).</text>
</comment>
<comment type="catalytic activity">
    <reaction evidence="1">
        <text>orotidine 5'-phosphate + diphosphate = orotate + 5-phospho-alpha-D-ribose 1-diphosphate</text>
        <dbReference type="Rhea" id="RHEA:10380"/>
        <dbReference type="ChEBI" id="CHEBI:30839"/>
        <dbReference type="ChEBI" id="CHEBI:33019"/>
        <dbReference type="ChEBI" id="CHEBI:57538"/>
        <dbReference type="ChEBI" id="CHEBI:58017"/>
        <dbReference type="EC" id="2.4.2.10"/>
    </reaction>
</comment>
<comment type="cofactor">
    <cofactor evidence="1">
        <name>Mg(2+)</name>
        <dbReference type="ChEBI" id="CHEBI:18420"/>
    </cofactor>
</comment>
<comment type="pathway">
    <text evidence="1">Pyrimidine metabolism; UMP biosynthesis via de novo pathway; UMP from orotate: step 1/2.</text>
</comment>
<comment type="subunit">
    <text evidence="1">Homodimer.</text>
</comment>
<comment type="similarity">
    <text evidence="1">Belongs to the purine/pyrimidine phosphoribosyltransferase family. PyrE subfamily.</text>
</comment>
<reference key="1">
    <citation type="journal article" date="2000" name="Nucleic Acids Res.">
        <title>Complete genome sequence of the alkaliphilic bacterium Bacillus halodurans and genomic sequence comparison with Bacillus subtilis.</title>
        <authorList>
            <person name="Takami H."/>
            <person name="Nakasone K."/>
            <person name="Takaki Y."/>
            <person name="Maeno G."/>
            <person name="Sasaki R."/>
            <person name="Masui N."/>
            <person name="Fuji F."/>
            <person name="Hirama C."/>
            <person name="Nakamura Y."/>
            <person name="Ogasawara N."/>
            <person name="Kuhara S."/>
            <person name="Horikoshi K."/>
        </authorList>
    </citation>
    <scope>NUCLEOTIDE SEQUENCE [LARGE SCALE GENOMIC DNA]</scope>
    <source>
        <strain>ATCC BAA-125 / DSM 18197 / FERM 7344 / JCM 9153 / C-125</strain>
    </source>
</reference>
<protein>
    <recommendedName>
        <fullName evidence="1">Orotate phosphoribosyltransferase</fullName>
        <shortName evidence="1">OPRT</shortName>
        <shortName evidence="1">OPRTase</shortName>
        <ecNumber evidence="1">2.4.2.10</ecNumber>
    </recommendedName>
</protein>
<name>PYRE_HALH5</name>
<sequence length="210" mass="23217">MKETIAQHLLDIEAVTLRPNDPFTWSSGIKSPIYCDNRLTMGYPHIRQSIAEGFEQLIRSHFPEVTVVAGTATAGIPHAAWVSDRLQAPMVYVRSKSKGHGKQNQIEGKLSSKDRVVIIEDLISTGGSVIQAADALREAGADVLGVVAIFTYGLEKGQDQLEAANLPSYVLTDYPTLLDVAIRRGDISEEELQKLQKWRENPSSQSWMNE</sequence>
<organism>
    <name type="scientific">Halalkalibacterium halodurans (strain ATCC BAA-125 / DSM 18197 / FERM 7344 / JCM 9153 / C-125)</name>
    <name type="common">Bacillus halodurans</name>
    <dbReference type="NCBI Taxonomy" id="272558"/>
    <lineage>
        <taxon>Bacteria</taxon>
        <taxon>Bacillati</taxon>
        <taxon>Bacillota</taxon>
        <taxon>Bacilli</taxon>
        <taxon>Bacillales</taxon>
        <taxon>Bacillaceae</taxon>
        <taxon>Halalkalibacterium (ex Joshi et al. 2022)</taxon>
    </lineage>
</organism>
<keyword id="KW-0328">Glycosyltransferase</keyword>
<keyword id="KW-0460">Magnesium</keyword>
<keyword id="KW-0665">Pyrimidine biosynthesis</keyword>
<keyword id="KW-1185">Reference proteome</keyword>
<keyword id="KW-0808">Transferase</keyword>
<accession>Q9K9W3</accession>
<dbReference type="EC" id="2.4.2.10" evidence="1"/>
<dbReference type="EMBL" id="BA000004">
    <property type="protein sequence ID" value="BAB06251.1"/>
    <property type="molecule type" value="Genomic_DNA"/>
</dbReference>
<dbReference type="PIR" id="D83966">
    <property type="entry name" value="D83966"/>
</dbReference>
<dbReference type="RefSeq" id="WP_010898683.1">
    <property type="nucleotide sequence ID" value="NC_002570.2"/>
</dbReference>
<dbReference type="SMR" id="Q9K9W3"/>
<dbReference type="STRING" id="272558.gene:10728430"/>
<dbReference type="GeneID" id="87598044"/>
<dbReference type="KEGG" id="bha:BH2532"/>
<dbReference type="eggNOG" id="COG0461">
    <property type="taxonomic scope" value="Bacteria"/>
</dbReference>
<dbReference type="HOGENOM" id="CLU_074878_1_1_9"/>
<dbReference type="OrthoDB" id="9802134at2"/>
<dbReference type="UniPathway" id="UPA00070">
    <property type="reaction ID" value="UER00119"/>
</dbReference>
<dbReference type="Proteomes" id="UP000001258">
    <property type="component" value="Chromosome"/>
</dbReference>
<dbReference type="GO" id="GO:0000287">
    <property type="term" value="F:magnesium ion binding"/>
    <property type="evidence" value="ECO:0007669"/>
    <property type="project" value="UniProtKB-UniRule"/>
</dbReference>
<dbReference type="GO" id="GO:0004588">
    <property type="term" value="F:orotate phosphoribosyltransferase activity"/>
    <property type="evidence" value="ECO:0007669"/>
    <property type="project" value="UniProtKB-UniRule"/>
</dbReference>
<dbReference type="GO" id="GO:0044205">
    <property type="term" value="P:'de novo' UMP biosynthetic process"/>
    <property type="evidence" value="ECO:0007669"/>
    <property type="project" value="UniProtKB-UniRule"/>
</dbReference>
<dbReference type="GO" id="GO:0019856">
    <property type="term" value="P:pyrimidine nucleobase biosynthetic process"/>
    <property type="evidence" value="ECO:0007669"/>
    <property type="project" value="TreeGrafter"/>
</dbReference>
<dbReference type="CDD" id="cd06223">
    <property type="entry name" value="PRTases_typeI"/>
    <property type="match status" value="1"/>
</dbReference>
<dbReference type="Gene3D" id="3.40.50.2020">
    <property type="match status" value="1"/>
</dbReference>
<dbReference type="HAMAP" id="MF_01208">
    <property type="entry name" value="PyrE"/>
    <property type="match status" value="1"/>
</dbReference>
<dbReference type="InterPro" id="IPR023031">
    <property type="entry name" value="OPRT"/>
</dbReference>
<dbReference type="InterPro" id="IPR004467">
    <property type="entry name" value="Or_phspho_trans_dom"/>
</dbReference>
<dbReference type="InterPro" id="IPR000836">
    <property type="entry name" value="PRibTrfase_dom"/>
</dbReference>
<dbReference type="InterPro" id="IPR029057">
    <property type="entry name" value="PRTase-like"/>
</dbReference>
<dbReference type="NCBIfam" id="TIGR00336">
    <property type="entry name" value="pyrE"/>
    <property type="match status" value="1"/>
</dbReference>
<dbReference type="PANTHER" id="PTHR19278">
    <property type="entry name" value="OROTATE PHOSPHORIBOSYLTRANSFERASE"/>
    <property type="match status" value="1"/>
</dbReference>
<dbReference type="PANTHER" id="PTHR19278:SF9">
    <property type="entry name" value="URIDINE 5'-MONOPHOSPHATE SYNTHASE"/>
    <property type="match status" value="1"/>
</dbReference>
<dbReference type="Pfam" id="PF00156">
    <property type="entry name" value="Pribosyltran"/>
    <property type="match status" value="1"/>
</dbReference>
<dbReference type="SUPFAM" id="SSF53271">
    <property type="entry name" value="PRTase-like"/>
    <property type="match status" value="1"/>
</dbReference>
<dbReference type="PROSITE" id="PS00103">
    <property type="entry name" value="PUR_PYR_PR_TRANSFER"/>
    <property type="match status" value="1"/>
</dbReference>